<proteinExistence type="inferred from homology"/>
<keyword id="KW-0325">Glycoprotein</keyword>
<keyword id="KW-0333">Golgi apparatus</keyword>
<keyword id="KW-0472">Membrane</keyword>
<keyword id="KW-0653">Protein transport</keyword>
<keyword id="KW-0675">Receptor</keyword>
<keyword id="KW-1185">Reference proteome</keyword>
<keyword id="KW-0677">Repeat</keyword>
<keyword id="KW-0732">Signal</keyword>
<keyword id="KW-0812">Transmembrane</keyword>
<keyword id="KW-1133">Transmembrane helix</keyword>
<keyword id="KW-0813">Transport</keyword>
<sequence length="1518" mass="170158">MRLRGKTVASWRILLSVLTLAAAVQAKDEPTIKVTTIKHPPLNLNYFEDSNTVLYQDISERNLYRSEDAGITWDRVKDIPDNQASLLTMHSFDKNRAYVLTQGTEHFKTTDRGKSWQKFSSGAPPNIFMGGDILHFHAGDPDRVIFNGADCIGIFCDLITLYTTDNFKSKAKFLRGNTEGCYWAKSSDLFTTGKDDLDKQRILCVVRDNFSPFKEDNRLLASDNYFQKVDNKVQEFEPDMDTNHGVQGVVSLAVVKKYLMVATSSLNTDEMGLFVTDDTIKWHRAMFPTSHGHKVNQGAYTVLESTNYSIQIDVMNTRPSNPTGVMFTSNSNGTFFTENLEHTNRNTNGHVDFEKITGVQGIFMVNVVQNWEEVEKDTNRGGKHVQKEIVSKITFDDGRTFHDLKSGGDQLHLHSVTDLDNVGRVFSSPAPGLVLAIGNKGKSLGKFGDGDVYVSDDAGVTWKKALDGPHKYEFGDLGSILVAVKDSHKEDIGEIRYSLDHGESWKTAPLPDDLKIKPELLTTTQDSTSLKFLLVGKTGGDNPKFHIIALDFEGLHERTCKEDDFEDWHARLDENGKPSCLMGHKQTYRRRKKTADCFLNQEFKDPVPVTEDCECTDADFECDYNFIRDGDNCKKAGPIIAPDNVCKNARPDDTFKGSSGWRKIPGNTCKRKSGDQKDDPVERKCSEAVNAPAAPADGKIKAVQHVFKTDFKDFEKIYLERGESSTEVDETIIVRPVEYSGNSMRADNQIWRTKDHGKNWERILQDEDVRGIYPHSFFKDVVFFTTDSKKVLYTIDRAEHFHSFEAPTKPGSGNPLSFHPDKKDWLIWVGEKCEKVNGKETCFTEASISRDRGDNWKTAMRYVQKCEFTGHSAYRYRDLRQIVCLAHKEENNEKDNPKVIVSSNDFFDEDKTFHQDRVKNFALMAEFIVVAAEDQEKQGLRALASLDGVSYAEAHFPVNFKVSHQNAYTVLDSSTHAVNLFVATETAEGRRYGSIIKSNSNGTSYVMSAQAVNCNDQYYVDFEKIPGLEGVALINTVANRDKRNEPKKVQTQISHNDGSQWAFLPPPKADVDGKSYSCSSTEGDEKCALHLHHYTERSDKRKTFSAATAVGLMFGNGNVGSSLSSLKEADTFMTTDAGITWKNVKKGAWTWQYGDQGSIVVLVQRASRENPVKTKMISYTTDEGKTWKDFAFTDKEVTVLDISTLRSGASRNFLIWCKDDGGETFSVNVDFTGLADRPCKSDEGSSDYYLWSPKHPSQPDNCLFGHVSQYLRKKDDANCYNDARVQHLYQVENCTCTRADYECDYNYELGTDKQCKLVPGTSPISAEQWCKENPDAVEYYEPTGFRRIPLTTCIGNGHNELDKQSKAHPCAGKEDEFERRRRTSGIAIFFAVVIPFGLAGAIGWWVYRNWNGKIGQIRLGESSSLDNDAPWVKYPVIALSAVVAVAAALPLVASALWRRATSAYESVSGGGGGGGSWLSGRGNRRFTTRDSFARGRGDYAVVDDDEGELLGDDSDEEV</sequence>
<reference key="1">
    <citation type="journal article" date="2012" name="Nat. Genet.">
        <title>Lifestyle transitions in plant pathogenic Colletotrichum fungi deciphered by genome and transcriptome analyses.</title>
        <authorList>
            <person name="O'Connell R.J."/>
            <person name="Thon M.R."/>
            <person name="Hacquard S."/>
            <person name="Amyotte S.G."/>
            <person name="Kleemann J."/>
            <person name="Torres M.F."/>
            <person name="Damm U."/>
            <person name="Buiate E.A."/>
            <person name="Epstein L."/>
            <person name="Alkan N."/>
            <person name="Altmueller J."/>
            <person name="Alvarado-Balderrama L."/>
            <person name="Bauser C.A."/>
            <person name="Becker C."/>
            <person name="Birren B.W."/>
            <person name="Chen Z."/>
            <person name="Choi J."/>
            <person name="Crouch J.A."/>
            <person name="Duvick J.P."/>
            <person name="Farman M.A."/>
            <person name="Gan P."/>
            <person name="Heiman D."/>
            <person name="Henrissat B."/>
            <person name="Howard R.J."/>
            <person name="Kabbage M."/>
            <person name="Koch C."/>
            <person name="Kracher B."/>
            <person name="Kubo Y."/>
            <person name="Law A.D."/>
            <person name="Lebrun M.-H."/>
            <person name="Lee Y.-H."/>
            <person name="Miyara I."/>
            <person name="Moore N."/>
            <person name="Neumann U."/>
            <person name="Nordstroem K."/>
            <person name="Panaccione D.G."/>
            <person name="Panstruga R."/>
            <person name="Place M."/>
            <person name="Proctor R.H."/>
            <person name="Prusky D."/>
            <person name="Rech G."/>
            <person name="Reinhardt R."/>
            <person name="Rollins J.A."/>
            <person name="Rounsley S."/>
            <person name="Schardl C.L."/>
            <person name="Schwartz D.C."/>
            <person name="Shenoy N."/>
            <person name="Shirasu K."/>
            <person name="Sikhakolli U.R."/>
            <person name="Stueber K."/>
            <person name="Sukno S.A."/>
            <person name="Sweigard J.A."/>
            <person name="Takano Y."/>
            <person name="Takahara H."/>
            <person name="Trail F."/>
            <person name="van der Does H.C."/>
            <person name="Voll L.M."/>
            <person name="Will I."/>
            <person name="Young S."/>
            <person name="Zeng Q."/>
            <person name="Zhang J."/>
            <person name="Zhou S."/>
            <person name="Dickman M.B."/>
            <person name="Schulze-Lefert P."/>
            <person name="Ver Loren van Themaat E."/>
            <person name="Ma L.-J."/>
            <person name="Vaillancourt L.J."/>
        </authorList>
    </citation>
    <scope>NUCLEOTIDE SEQUENCE [LARGE SCALE GENOMIC DNA]</scope>
    <source>
        <strain>M1.001 / M2 / FGSC 10212</strain>
    </source>
</reference>
<comment type="function">
    <text evidence="1">Functions as a sorting receptor in the Golgi compartment required for the intracellular sorting and delivery of soluble vacuolar proteins, like carboxypeptidase Y (CPY) and proteinase A. Executes multiple rounds of sorting by cycling between the late Golgi and a prevacuolar endosome-like compartment (By similarity).</text>
</comment>
<comment type="subcellular location">
    <subcellularLocation>
        <location evidence="1">Golgi apparatus</location>
        <location evidence="1">trans-Golgi network membrane</location>
        <topology evidence="1">Multi-pass membrane protein</topology>
    </subcellularLocation>
    <subcellularLocation>
        <location evidence="1">Prevacuolar compartment membrane</location>
        <topology evidence="1">Multi-pass membrane protein</topology>
    </subcellularLocation>
    <text evidence="1">Cycles between the Golgi apparatus and the prevacuolar compartment.</text>
</comment>
<comment type="similarity">
    <text evidence="4">Belongs to the VPS10-related sortilin family.</text>
</comment>
<gene>
    <name type="primary">VPS10</name>
    <name type="ORF">GLRG_04515</name>
</gene>
<accession>E3QER5</accession>
<organism>
    <name type="scientific">Colletotrichum graminicola (strain M1.001 / M2 / FGSC 10212)</name>
    <name type="common">Maize anthracnose fungus</name>
    <name type="synonym">Glomerella graminicola</name>
    <dbReference type="NCBI Taxonomy" id="645133"/>
    <lineage>
        <taxon>Eukaryota</taxon>
        <taxon>Fungi</taxon>
        <taxon>Dikarya</taxon>
        <taxon>Ascomycota</taxon>
        <taxon>Pezizomycotina</taxon>
        <taxon>Sordariomycetes</taxon>
        <taxon>Hypocreomycetidae</taxon>
        <taxon>Glomerellales</taxon>
        <taxon>Glomerellaceae</taxon>
        <taxon>Colletotrichum</taxon>
        <taxon>Colletotrichum graminicola species complex</taxon>
    </lineage>
</organism>
<dbReference type="EMBL" id="GG697344">
    <property type="protein sequence ID" value="EFQ29371.1"/>
    <property type="molecule type" value="Genomic_DNA"/>
</dbReference>
<dbReference type="RefSeq" id="XP_008093391.1">
    <property type="nucleotide sequence ID" value="XM_008095200.1"/>
</dbReference>
<dbReference type="SMR" id="E3QER5"/>
<dbReference type="STRING" id="645133.E3QER5"/>
<dbReference type="GlyCosmos" id="E3QER5">
    <property type="glycosylation" value="4 sites, No reported glycans"/>
</dbReference>
<dbReference type="EnsemblFungi" id="EFQ29371">
    <property type="protein sequence ID" value="EFQ29371"/>
    <property type="gene ID" value="GLRG_04515"/>
</dbReference>
<dbReference type="GeneID" id="24409880"/>
<dbReference type="VEuPathDB" id="FungiDB:GLRG_04515"/>
<dbReference type="eggNOG" id="KOG3511">
    <property type="taxonomic scope" value="Eukaryota"/>
</dbReference>
<dbReference type="HOGENOM" id="CLU_000700_0_0_1"/>
<dbReference type="OrthoDB" id="443634at2759"/>
<dbReference type="Proteomes" id="UP000008782">
    <property type="component" value="Unassembled WGS sequence"/>
</dbReference>
<dbReference type="GO" id="GO:0005829">
    <property type="term" value="C:cytosol"/>
    <property type="evidence" value="ECO:0007669"/>
    <property type="project" value="GOC"/>
</dbReference>
<dbReference type="GO" id="GO:0005794">
    <property type="term" value="C:Golgi apparatus"/>
    <property type="evidence" value="ECO:0007669"/>
    <property type="project" value="UniProtKB-SubCell"/>
</dbReference>
<dbReference type="GO" id="GO:0016020">
    <property type="term" value="C:membrane"/>
    <property type="evidence" value="ECO:0007669"/>
    <property type="project" value="UniProtKB-KW"/>
</dbReference>
<dbReference type="GO" id="GO:0006895">
    <property type="term" value="P:Golgi to endosome transport"/>
    <property type="evidence" value="ECO:0007669"/>
    <property type="project" value="TreeGrafter"/>
</dbReference>
<dbReference type="GO" id="GO:0006896">
    <property type="term" value="P:Golgi to vacuole transport"/>
    <property type="evidence" value="ECO:0007669"/>
    <property type="project" value="TreeGrafter"/>
</dbReference>
<dbReference type="GO" id="GO:0006623">
    <property type="term" value="P:protein targeting to vacuole"/>
    <property type="evidence" value="ECO:0007669"/>
    <property type="project" value="TreeGrafter"/>
</dbReference>
<dbReference type="CDD" id="cd15482">
    <property type="entry name" value="Sialidase_non-viral"/>
    <property type="match status" value="2"/>
</dbReference>
<dbReference type="FunFam" id="3.30.60.270:FF:000005">
    <property type="entry name" value="Sortilin"/>
    <property type="match status" value="2"/>
</dbReference>
<dbReference type="FunFam" id="2.10.70.80:FF:000001">
    <property type="entry name" value="Sortilin-related VPS10 domain-containing receptor 1"/>
    <property type="match status" value="1"/>
</dbReference>
<dbReference type="Gene3D" id="2.10.70.80">
    <property type="match status" value="2"/>
</dbReference>
<dbReference type="Gene3D" id="3.30.60.270">
    <property type="match status" value="2"/>
</dbReference>
<dbReference type="Gene3D" id="2.130.10.10">
    <property type="entry name" value="YVTN repeat-like/Quinoprotein amine dehydrogenase"/>
    <property type="match status" value="1"/>
</dbReference>
<dbReference type="InterPro" id="IPR031777">
    <property type="entry name" value="Sortilin_C"/>
</dbReference>
<dbReference type="InterPro" id="IPR031778">
    <property type="entry name" value="Sortilin_N"/>
</dbReference>
<dbReference type="InterPro" id="IPR006581">
    <property type="entry name" value="VPS10"/>
</dbReference>
<dbReference type="InterPro" id="IPR050310">
    <property type="entry name" value="VPS10-sortilin"/>
</dbReference>
<dbReference type="InterPro" id="IPR015943">
    <property type="entry name" value="WD40/YVTN_repeat-like_dom_sf"/>
</dbReference>
<dbReference type="PANTHER" id="PTHR12106">
    <property type="entry name" value="SORTILIN RELATED"/>
    <property type="match status" value="1"/>
</dbReference>
<dbReference type="PANTHER" id="PTHR12106:SF27">
    <property type="entry name" value="SORTILIN-RELATED RECEPTOR"/>
    <property type="match status" value="1"/>
</dbReference>
<dbReference type="Pfam" id="PF15902">
    <property type="entry name" value="Sortilin-Vps10"/>
    <property type="match status" value="2"/>
</dbReference>
<dbReference type="Pfam" id="PF15901">
    <property type="entry name" value="Sortilin_C"/>
    <property type="match status" value="2"/>
</dbReference>
<dbReference type="SMART" id="SM00602">
    <property type="entry name" value="VPS10"/>
    <property type="match status" value="2"/>
</dbReference>
<dbReference type="SUPFAM" id="SSF110296">
    <property type="entry name" value="Oligoxyloglucan reducing end-specific cellobiohydrolase"/>
    <property type="match status" value="2"/>
</dbReference>
<name>VPS10_COLGM</name>
<evidence type="ECO:0000250" key="1"/>
<evidence type="ECO:0000255" key="2"/>
<evidence type="ECO:0000256" key="3">
    <source>
        <dbReference type="SAM" id="MobiDB-lite"/>
    </source>
</evidence>
<evidence type="ECO:0000305" key="4"/>
<feature type="signal peptide" evidence="2">
    <location>
        <begin position="1"/>
        <end position="26"/>
    </location>
</feature>
<feature type="chain" id="PRO_0000407515" description="Vacuolar protein sorting/targeting protein 10">
    <location>
        <begin position="27"/>
        <end position="1518"/>
    </location>
</feature>
<feature type="topological domain" description="Lumenal" evidence="2">
    <location>
        <begin position="27"/>
        <end position="1385"/>
    </location>
</feature>
<feature type="transmembrane region" description="Helical" evidence="2">
    <location>
        <begin position="1386"/>
        <end position="1406"/>
    </location>
</feature>
<feature type="topological domain" description="Cytoplasmic" evidence="2">
    <location>
        <begin position="1407"/>
        <end position="1435"/>
    </location>
</feature>
<feature type="transmembrane region" description="Helical" evidence="2">
    <location>
        <begin position="1436"/>
        <end position="1456"/>
    </location>
</feature>
<feature type="topological domain" description="Lumenal" evidence="2">
    <location>
        <begin position="1457"/>
        <end position="1518"/>
    </location>
</feature>
<feature type="repeat" description="BNR 1">
    <location>
        <begin position="64"/>
        <end position="74"/>
    </location>
</feature>
<feature type="repeat" description="BNR 2">
    <location>
        <begin position="107"/>
        <end position="118"/>
    </location>
</feature>
<feature type="repeat" description="BNR 3">
    <location>
        <begin position="453"/>
        <end position="464"/>
    </location>
</feature>
<feature type="repeat" description="BNR 4">
    <location>
        <begin position="496"/>
        <end position="506"/>
    </location>
</feature>
<feature type="repeat" description="BNR 5">
    <location>
        <begin position="751"/>
        <end position="761"/>
    </location>
</feature>
<feature type="repeat" description="BNR 6">
    <location>
        <begin position="848"/>
        <end position="857"/>
    </location>
</feature>
<feature type="repeat" description="BNR 7">
    <location>
        <begin position="1132"/>
        <end position="1142"/>
    </location>
</feature>
<feature type="repeat" description="BNR 8">
    <location>
        <begin position="1179"/>
        <end position="1188"/>
    </location>
</feature>
<feature type="region of interest" description="Disordered" evidence="3">
    <location>
        <begin position="657"/>
        <end position="681"/>
    </location>
</feature>
<feature type="compositionally biased region" description="Basic and acidic residues" evidence="3">
    <location>
        <begin position="672"/>
        <end position="681"/>
    </location>
</feature>
<feature type="glycosylation site" description="N-linked (GlcNAc...) asparagine" evidence="2">
    <location>
        <position position="307"/>
    </location>
</feature>
<feature type="glycosylation site" description="N-linked (GlcNAc...) asparagine" evidence="2">
    <location>
        <position position="332"/>
    </location>
</feature>
<feature type="glycosylation site" description="N-linked (GlcNAc...) asparagine" evidence="2">
    <location>
        <position position="1001"/>
    </location>
</feature>
<feature type="glycosylation site" description="N-linked (GlcNAc...) asparagine" evidence="2">
    <location>
        <position position="1293"/>
    </location>
</feature>
<protein>
    <recommendedName>
        <fullName>Vacuolar protein sorting/targeting protein 10</fullName>
    </recommendedName>
    <alternativeName>
        <fullName>Carboxypeptidase Y receptor</fullName>
        <shortName>CPY receptor</shortName>
    </alternativeName>
    <alternativeName>
        <fullName>Sortilin VPS10</fullName>
    </alternativeName>
    <alternativeName>
        <fullName>Vacuolar carboxypeptidase sorting receptor VPS10</fullName>
    </alternativeName>
</protein>